<keyword id="KW-0067">ATP-binding</keyword>
<keyword id="KW-0143">Chaperone</keyword>
<keyword id="KW-0963">Cytoplasm</keyword>
<keyword id="KW-0413">Isomerase</keyword>
<keyword id="KW-0547">Nucleotide-binding</keyword>
<comment type="function">
    <text evidence="1">Together with its co-chaperonin GroES, plays an essential role in assisting protein folding. The GroEL-GroES system forms a nano-cage that allows encapsulation of the non-native substrate proteins and provides a physical environment optimized to promote and accelerate protein folding.</text>
</comment>
<comment type="catalytic activity">
    <reaction evidence="1">
        <text>ATP + H2O + a folded polypeptide = ADP + phosphate + an unfolded polypeptide.</text>
        <dbReference type="EC" id="5.6.1.7"/>
    </reaction>
</comment>
<comment type="subunit">
    <text evidence="1">Forms a cylinder of 14 subunits composed of two heptameric rings stacked back-to-back. Interacts with the co-chaperonin GroES.</text>
</comment>
<comment type="subcellular location">
    <subcellularLocation>
        <location evidence="1">Cytoplasm</location>
    </subcellularLocation>
</comment>
<comment type="similarity">
    <text evidence="1">Belongs to the chaperonin (HSP60) family.</text>
</comment>
<organism>
    <name type="scientific">Methylovorus sp. (strain SS1 / DSM 11726)</name>
    <dbReference type="NCBI Taxonomy" id="81683"/>
    <lineage>
        <taxon>Bacteria</taxon>
        <taxon>Pseudomonadati</taxon>
        <taxon>Pseudomonadota</taxon>
        <taxon>Betaproteobacteria</taxon>
        <taxon>Nitrosomonadales</taxon>
        <taxon>Methylophilaceae</taxon>
        <taxon>Methylovorus</taxon>
    </lineage>
</organism>
<dbReference type="EC" id="5.6.1.7" evidence="1"/>
<dbReference type="EMBL" id="AF152236">
    <property type="protein sequence ID" value="AAD34149.1"/>
    <property type="molecule type" value="Genomic_DNA"/>
</dbReference>
<dbReference type="SMR" id="Q9WWL4"/>
<dbReference type="GO" id="GO:0005737">
    <property type="term" value="C:cytoplasm"/>
    <property type="evidence" value="ECO:0007669"/>
    <property type="project" value="UniProtKB-SubCell"/>
</dbReference>
<dbReference type="GO" id="GO:0005524">
    <property type="term" value="F:ATP binding"/>
    <property type="evidence" value="ECO:0007669"/>
    <property type="project" value="UniProtKB-UniRule"/>
</dbReference>
<dbReference type="GO" id="GO:0140662">
    <property type="term" value="F:ATP-dependent protein folding chaperone"/>
    <property type="evidence" value="ECO:0007669"/>
    <property type="project" value="InterPro"/>
</dbReference>
<dbReference type="GO" id="GO:0016853">
    <property type="term" value="F:isomerase activity"/>
    <property type="evidence" value="ECO:0007669"/>
    <property type="project" value="UniProtKB-KW"/>
</dbReference>
<dbReference type="GO" id="GO:0051082">
    <property type="term" value="F:unfolded protein binding"/>
    <property type="evidence" value="ECO:0007669"/>
    <property type="project" value="UniProtKB-UniRule"/>
</dbReference>
<dbReference type="GO" id="GO:0042026">
    <property type="term" value="P:protein refolding"/>
    <property type="evidence" value="ECO:0007669"/>
    <property type="project" value="UniProtKB-UniRule"/>
</dbReference>
<dbReference type="CDD" id="cd03344">
    <property type="entry name" value="GroEL"/>
    <property type="match status" value="1"/>
</dbReference>
<dbReference type="FunFam" id="3.50.7.10:FF:000001">
    <property type="entry name" value="60 kDa chaperonin"/>
    <property type="match status" value="1"/>
</dbReference>
<dbReference type="Gene3D" id="3.50.7.10">
    <property type="entry name" value="GroEL"/>
    <property type="match status" value="1"/>
</dbReference>
<dbReference type="Gene3D" id="1.10.560.10">
    <property type="entry name" value="GroEL-like equatorial domain"/>
    <property type="match status" value="1"/>
</dbReference>
<dbReference type="Gene3D" id="3.30.260.10">
    <property type="entry name" value="TCP-1-like chaperonin intermediate domain"/>
    <property type="match status" value="1"/>
</dbReference>
<dbReference type="HAMAP" id="MF_00600">
    <property type="entry name" value="CH60"/>
    <property type="match status" value="1"/>
</dbReference>
<dbReference type="InterPro" id="IPR018370">
    <property type="entry name" value="Chaperonin_Cpn60_CS"/>
</dbReference>
<dbReference type="InterPro" id="IPR001844">
    <property type="entry name" value="Cpn60/GroEL"/>
</dbReference>
<dbReference type="InterPro" id="IPR002423">
    <property type="entry name" value="Cpn60/GroEL/TCP-1"/>
</dbReference>
<dbReference type="InterPro" id="IPR027409">
    <property type="entry name" value="GroEL-like_apical_dom_sf"/>
</dbReference>
<dbReference type="InterPro" id="IPR027413">
    <property type="entry name" value="GROEL-like_equatorial_sf"/>
</dbReference>
<dbReference type="InterPro" id="IPR027410">
    <property type="entry name" value="TCP-1-like_intermed_sf"/>
</dbReference>
<dbReference type="NCBIfam" id="TIGR02348">
    <property type="entry name" value="GroEL"/>
    <property type="match status" value="1"/>
</dbReference>
<dbReference type="NCBIfam" id="NF000592">
    <property type="entry name" value="PRK00013.1"/>
    <property type="match status" value="1"/>
</dbReference>
<dbReference type="NCBIfam" id="NF009487">
    <property type="entry name" value="PRK12849.1"/>
    <property type="match status" value="1"/>
</dbReference>
<dbReference type="NCBIfam" id="NF009488">
    <property type="entry name" value="PRK12850.1"/>
    <property type="match status" value="1"/>
</dbReference>
<dbReference type="NCBIfam" id="NF009489">
    <property type="entry name" value="PRK12851.1"/>
    <property type="match status" value="1"/>
</dbReference>
<dbReference type="PANTHER" id="PTHR45633">
    <property type="entry name" value="60 KDA HEAT SHOCK PROTEIN, MITOCHONDRIAL"/>
    <property type="match status" value="1"/>
</dbReference>
<dbReference type="Pfam" id="PF00118">
    <property type="entry name" value="Cpn60_TCP1"/>
    <property type="match status" value="1"/>
</dbReference>
<dbReference type="PRINTS" id="PR00298">
    <property type="entry name" value="CHAPERONIN60"/>
</dbReference>
<dbReference type="SUPFAM" id="SSF52029">
    <property type="entry name" value="GroEL apical domain-like"/>
    <property type="match status" value="1"/>
</dbReference>
<dbReference type="SUPFAM" id="SSF48592">
    <property type="entry name" value="GroEL equatorial domain-like"/>
    <property type="match status" value="1"/>
</dbReference>
<dbReference type="SUPFAM" id="SSF54849">
    <property type="entry name" value="GroEL-intermediate domain like"/>
    <property type="match status" value="1"/>
</dbReference>
<dbReference type="PROSITE" id="PS00296">
    <property type="entry name" value="CHAPERONINS_CPN60"/>
    <property type="match status" value="1"/>
</dbReference>
<name>CH60_METSS</name>
<protein>
    <recommendedName>
        <fullName evidence="1">Chaperonin GroEL</fullName>
        <ecNumber evidence="1">5.6.1.7</ecNumber>
    </recommendedName>
    <alternativeName>
        <fullName evidence="1">60 kDa chaperonin</fullName>
    </alternativeName>
    <alternativeName>
        <fullName evidence="1">Chaperonin-60</fullName>
        <shortName evidence="1">Cpn60</shortName>
    </alternativeName>
</protein>
<evidence type="ECO:0000255" key="1">
    <source>
        <dbReference type="HAMAP-Rule" id="MF_00600"/>
    </source>
</evidence>
<reference key="1">
    <citation type="submission" date="1999-05" db="EMBL/GenBank/DDBJ databases">
        <title>Cloning, sequencing, and molecular analysis of the groESL operon from Methylovorus sp. strain SS1 DSM11726.</title>
        <authorList>
            <person name="Eom C.Y."/>
            <person name="Kim Y.M."/>
        </authorList>
    </citation>
    <scope>NUCLEOTIDE SEQUENCE [GENOMIC DNA]</scope>
</reference>
<proteinExistence type="inferred from homology"/>
<accession>Q9WWL4</accession>
<sequence>MAAKEVKFHDHARTRIVQGVNVLADAVKVTLAPRAVMCLIERSFGAPVITKDGVSVAKEIELQDKFENMGAQMVKQVASKTADIAGDGTTTATVLAQAIVQEGMKHVVAGVNPMDLKRGIDKAVATVVDELHKLSKPITTNKEIAQVGSISANSDHPIGKIIADAMDKVGKEGVITVEDGKSLDNELDVVEGMQFDRGYLSPYFINNPEKQTVEFDDPLILLYDKKISSIRDLLPTLENVAKAGKPLLIIAEDLEGEALATLVVNSMRGILKVAAVKAPGFGDRRKAMLEDIAILTGATVISEETGKQLEKASLEDLGRAKRVELQKENTIIIDGAGEQKAIEARVKAIQAQIDESTSDYDREKLQERVAKLSGGVAVIKVGAATEVEMKEKKDRVDDALHATRAAVEEGIVPGGGVALLRARSRIVNLKGDNGDQDAGIRIVLRAIEAPLRAIAANAGDEPSVVINKVLAGSGNFGYNAATGEYADLVETGVVDPTKVTRTALQNAASVASLILTTDASIAELPKEEKAAVPAMPDMGY</sequence>
<feature type="chain" id="PRO_0000063419" description="Chaperonin GroEL">
    <location>
        <begin position="1"/>
        <end position="540"/>
    </location>
</feature>
<feature type="binding site" evidence="1">
    <location>
        <begin position="30"/>
        <end position="33"/>
    </location>
    <ligand>
        <name>ATP</name>
        <dbReference type="ChEBI" id="CHEBI:30616"/>
    </ligand>
</feature>
<feature type="binding site" evidence="1">
    <location>
        <position position="51"/>
    </location>
    <ligand>
        <name>ATP</name>
        <dbReference type="ChEBI" id="CHEBI:30616"/>
    </ligand>
</feature>
<feature type="binding site" evidence="1">
    <location>
        <begin position="87"/>
        <end position="91"/>
    </location>
    <ligand>
        <name>ATP</name>
        <dbReference type="ChEBI" id="CHEBI:30616"/>
    </ligand>
</feature>
<feature type="binding site" evidence="1">
    <location>
        <position position="415"/>
    </location>
    <ligand>
        <name>ATP</name>
        <dbReference type="ChEBI" id="CHEBI:30616"/>
    </ligand>
</feature>
<feature type="binding site" evidence="1">
    <location>
        <begin position="479"/>
        <end position="481"/>
    </location>
    <ligand>
        <name>ATP</name>
        <dbReference type="ChEBI" id="CHEBI:30616"/>
    </ligand>
</feature>
<feature type="binding site" evidence="1">
    <location>
        <position position="495"/>
    </location>
    <ligand>
        <name>ATP</name>
        <dbReference type="ChEBI" id="CHEBI:30616"/>
    </ligand>
</feature>
<gene>
    <name evidence="1" type="primary">groEL</name>
    <name evidence="1" type="synonym">groL</name>
</gene>